<protein>
    <recommendedName>
        <fullName evidence="3">DMOA farnesyltransferase nvfB</fullName>
        <ecNumber evidence="2">2.5.1.-</ecNumber>
    </recommendedName>
    <alternativeName>
        <fullName evidence="3">Novofumigatonin biosynthesis cluster protein B</fullName>
    </alternativeName>
</protein>
<proteinExistence type="evidence at protein level"/>
<keyword id="KW-0472">Membrane</keyword>
<keyword id="KW-1185">Reference proteome</keyword>
<keyword id="KW-0808">Transferase</keyword>
<keyword id="KW-0812">Transmembrane</keyword>
<keyword id="KW-1133">Transmembrane helix</keyword>
<gene>
    <name evidence="3" type="primary">nvfB</name>
    <name type="ORF">P174DRAFT_425997</name>
</gene>
<reference key="1">
    <citation type="journal article" date="2018" name="Proc. Natl. Acad. Sci. U.S.A.">
        <title>Linking secondary metabolites to gene clusters through genome sequencing of six diverse Aspergillus species.</title>
        <authorList>
            <person name="Kjaerboelling I."/>
            <person name="Vesth T.C."/>
            <person name="Frisvad J.C."/>
            <person name="Nybo J.L."/>
            <person name="Theobald S."/>
            <person name="Kuo A."/>
            <person name="Bowyer P."/>
            <person name="Matsuda Y."/>
            <person name="Mondo S."/>
            <person name="Lyhne E.K."/>
            <person name="Kogle M.E."/>
            <person name="Clum A."/>
            <person name="Lipzen A."/>
            <person name="Salamov A."/>
            <person name="Ngan C.Y."/>
            <person name="Daum C."/>
            <person name="Chiniquy J."/>
            <person name="Barry K."/>
            <person name="LaButti K."/>
            <person name="Haridas S."/>
            <person name="Simmons B.A."/>
            <person name="Magnuson J.K."/>
            <person name="Mortensen U.H."/>
            <person name="Larsen T.O."/>
            <person name="Grigoriev I.V."/>
            <person name="Baker S.E."/>
            <person name="Andersen M.R."/>
        </authorList>
    </citation>
    <scope>NUCLEOTIDE SEQUENCE [LARGE SCALE GENOMIC DNA]</scope>
    <source>
        <strain>IBT 16806</strain>
    </source>
</reference>
<reference key="2">
    <citation type="journal article" date="2018" name="Nat. Commun.">
        <title>Novofumigatonin biosynthesis involves a non-heme iron-dependent endoperoxide isomerase for orthoester formation.</title>
        <authorList>
            <person name="Matsuda Y."/>
            <person name="Bai T."/>
            <person name="Phippen C.B.W."/>
            <person name="Noedvig C.S."/>
            <person name="Kjaerboelling I."/>
            <person name="Vesth T.C."/>
            <person name="Andersen M.R."/>
            <person name="Mortensen U.H."/>
            <person name="Gotfredsen C.H."/>
            <person name="Abe I."/>
            <person name="Larsen T.O."/>
        </authorList>
    </citation>
    <scope>FUNCTION</scope>
    <scope>DISRUPTION PHENOTYPE</scope>
    <scope>CATALYTIC ACTIVITY</scope>
    <scope>PATHWAY</scope>
</reference>
<accession>A0A2I1BT09</accession>
<organism>
    <name type="scientific">Aspergillus novofumigatus (strain IBT 16806)</name>
    <dbReference type="NCBI Taxonomy" id="1392255"/>
    <lineage>
        <taxon>Eukaryota</taxon>
        <taxon>Fungi</taxon>
        <taxon>Dikarya</taxon>
        <taxon>Ascomycota</taxon>
        <taxon>Pezizomycotina</taxon>
        <taxon>Eurotiomycetes</taxon>
        <taxon>Eurotiomycetidae</taxon>
        <taxon>Eurotiales</taxon>
        <taxon>Aspergillaceae</taxon>
        <taxon>Aspergillus</taxon>
        <taxon>Aspergillus subgen. Fumigati</taxon>
    </lineage>
</organism>
<evidence type="ECO:0000255" key="1"/>
<evidence type="ECO:0000269" key="2">
    <source>
    </source>
</evidence>
<evidence type="ECO:0000303" key="3">
    <source>
    </source>
</evidence>
<evidence type="ECO:0000305" key="4"/>
<dbReference type="EC" id="2.5.1.-" evidence="2"/>
<dbReference type="EMBL" id="MSZS01000014">
    <property type="protein sequence ID" value="PKX88486.1"/>
    <property type="molecule type" value="Genomic_DNA"/>
</dbReference>
<dbReference type="SMR" id="A0A2I1BT09"/>
<dbReference type="STRING" id="1392255.A0A2I1BT09"/>
<dbReference type="VEuPathDB" id="FungiDB:P174DRAFT_425997"/>
<dbReference type="OMA" id="FGTWIRP"/>
<dbReference type="OrthoDB" id="18170at2759"/>
<dbReference type="UniPathway" id="UPA00213"/>
<dbReference type="Proteomes" id="UP000234474">
    <property type="component" value="Unassembled WGS sequence"/>
</dbReference>
<dbReference type="GO" id="GO:0005743">
    <property type="term" value="C:mitochondrial inner membrane"/>
    <property type="evidence" value="ECO:0007669"/>
    <property type="project" value="TreeGrafter"/>
</dbReference>
<dbReference type="GO" id="GO:0008412">
    <property type="term" value="F:4-hydroxybenzoate polyprenyltransferase activity"/>
    <property type="evidence" value="ECO:0007669"/>
    <property type="project" value="TreeGrafter"/>
</dbReference>
<dbReference type="GO" id="GO:0004311">
    <property type="term" value="F:geranylgeranyl diphosphate synthase activity"/>
    <property type="evidence" value="ECO:0000314"/>
    <property type="project" value="UniProt"/>
</dbReference>
<dbReference type="GO" id="GO:0140782">
    <property type="term" value="P:novofumigatonin biosynthetic process"/>
    <property type="evidence" value="ECO:0000314"/>
    <property type="project" value="GO_Central"/>
</dbReference>
<dbReference type="GO" id="GO:0006744">
    <property type="term" value="P:ubiquinone biosynthetic process"/>
    <property type="evidence" value="ECO:0007669"/>
    <property type="project" value="TreeGrafter"/>
</dbReference>
<dbReference type="CDD" id="cd13959">
    <property type="entry name" value="PT_UbiA_COQ2"/>
    <property type="match status" value="1"/>
</dbReference>
<dbReference type="FunFam" id="1.10.357.140:FF:000008">
    <property type="entry name" value="4-hydroxybenzoate octaprenyltransferase"/>
    <property type="match status" value="1"/>
</dbReference>
<dbReference type="Gene3D" id="1.10.357.140">
    <property type="entry name" value="UbiA prenyltransferase"/>
    <property type="match status" value="1"/>
</dbReference>
<dbReference type="Gene3D" id="1.20.120.1780">
    <property type="entry name" value="UbiA prenyltransferase"/>
    <property type="match status" value="1"/>
</dbReference>
<dbReference type="InterPro" id="IPR039653">
    <property type="entry name" value="Prenyltransferase"/>
</dbReference>
<dbReference type="InterPro" id="IPR000537">
    <property type="entry name" value="UbiA_prenyltransferase"/>
</dbReference>
<dbReference type="InterPro" id="IPR044878">
    <property type="entry name" value="UbiA_sf"/>
</dbReference>
<dbReference type="PANTHER" id="PTHR11048:SF39">
    <property type="entry name" value="POLYPRENYL TRANSFERASE AUSN"/>
    <property type="match status" value="1"/>
</dbReference>
<dbReference type="PANTHER" id="PTHR11048">
    <property type="entry name" value="PRENYLTRANSFERASES"/>
    <property type="match status" value="1"/>
</dbReference>
<dbReference type="Pfam" id="PF01040">
    <property type="entry name" value="UbiA"/>
    <property type="match status" value="1"/>
</dbReference>
<name>NVFB_ASPN1</name>
<feature type="chain" id="PRO_0000453077" description="DMOA farnesyltransferase nvfB">
    <location>
        <begin position="1"/>
        <end position="316"/>
    </location>
</feature>
<feature type="transmembrane region" description="Helical" evidence="1">
    <location>
        <begin position="47"/>
        <end position="67"/>
    </location>
</feature>
<feature type="transmembrane region" description="Helical" evidence="1">
    <location>
        <begin position="71"/>
        <end position="91"/>
    </location>
</feature>
<feature type="transmembrane region" description="Helical" evidence="1">
    <location>
        <begin position="115"/>
        <end position="135"/>
    </location>
</feature>
<feature type="transmembrane region" description="Helical" evidence="1">
    <location>
        <begin position="139"/>
        <end position="159"/>
    </location>
</feature>
<feature type="transmembrane region" description="Helical" evidence="1">
    <location>
        <begin position="162"/>
        <end position="182"/>
    </location>
</feature>
<feature type="transmembrane region" description="Helical" evidence="1">
    <location>
        <begin position="191"/>
        <end position="211"/>
    </location>
</feature>
<feature type="transmembrane region" description="Helical" evidence="1">
    <location>
        <begin position="234"/>
        <end position="254"/>
    </location>
</feature>
<feature type="transmembrane region" description="Helical" evidence="1">
    <location>
        <begin position="258"/>
        <end position="278"/>
    </location>
</feature>
<feature type="transmembrane region" description="Helical" evidence="1">
    <location>
        <begin position="294"/>
        <end position="314"/>
    </location>
</feature>
<sequence>MGGKAQNGEDEARGKVLSSLPPSLVPYAELMRVHRPLGYYLNTSPYVVGVVFGAAVAPTKLPATILLDRLLILVLWSLFLRSAGCVWNDVIDMDLDRQIARTRLRPLPRGAVSSWNAVMLTAGIFACGGSLLSFLPRECAIEALIEIFFALLYPFGKRFTDFPQLILVNIGWAIPMSMHSLGLDPLAYKKPTFFMFLFIALVIVMIDVVYSRQDTEEDMKVGVKSMAVRFKHSIELLSYAFFYASTGALLAAGYYSGLGIPFTVLSVGGHFGGFLYFLKTTGVGKAPQVESYAKLACLIASLFWVVGLFVEYYLRV</sequence>
<comment type="function">
    <text evidence="2">DMOA farnesyltransferase; part of the gene cluster that mediates the biosynthesis of novofumigatonin, a heavily oxygenated meroterpenoid containing a unique orthoester moiety (PubMed:29968715). The first step of the pathway is the synthesis of 3,5-dimethylorsellinic acid (DMOA) by the polyketide synthase nvfA via condensation of one acetyl-CoA starter unit with 3 malonyl-CoA units and 2 methylations (PubMed:29968715). DMOA is then converted to farnesyl-DMOA by the farnesyltransferase nvfB (PubMed:29968715). Epoxydation by FAD-dependent monooxygenase nvfK, followed by a protonation-initiated cyclization catalyzed by the terpene cyclase nvfL leads to the production of asnavolin H (PubMed:29968715). The short chain dehydrogenase nvfC then as a 3-OH dehydrogenase of asnovolin H to yield chemesin D (PubMed:29968715). There are two branches to synthesize asnovolin A from chemesin D (PubMed:29968715). In one branch, chemesin D undergoes Baeyer-Villiger oxidation by nvfH, methylation by nvfJ, and enoyl reduction by the nvfM D enoylreductase that reduces the double bond between C-5'and C-6', to form respectively asnovolin I, asnovolin K, and asnovolin A (PubMed:29968715). In the other branch, the methylation precedes the Baeyer-Villiger oxidation and the enoyl reduction to yield asnovolin A via the asnovolin J intermediate (PubMed:29968715). Asnovolin A is further converted to fumigatonoid A by the Fe(II)/2-oxoglutarate-dependent dioxygenase nvfI that catalyzes an endoperoxidation reaction (PubMed:29968715). The alpha/beta hydrolase nvfD then acts as an epimerase that converts fumigatonoid A to its C-5' epimer, which then undergoes spontaneous or nvfD-catalyzed lactonization (PubMed:29968715). The following step utilizes the ketoreductase nvfG to produce fumigatonoid B (PubMed:29968715). The dioxygenase nvfE further converts fumigatonoid B into fumigatonoid C (PubMed:29968715). Finally the Fe(II)/2-oxoglutarate-dependent dioxygenase nvfF catalyzes two rounds of oxidation to transform fumigatonoid C into the end product, novofumigatonin A (PubMed:29968715).</text>
</comment>
<comment type="catalytic activity">
    <reaction evidence="2">
        <text>3,5-dimethylorsellinate + (2E,6E)-farnesyl diphosphate = (3R)-3-farnesyl-6-hydroxy-2,3,5-trimethyl-4-oxocyclohexa-1,5-diene-1-carboxylate + diphosphate + H(+)</text>
        <dbReference type="Rhea" id="RHEA:49632"/>
        <dbReference type="ChEBI" id="CHEBI:15378"/>
        <dbReference type="ChEBI" id="CHEBI:33019"/>
        <dbReference type="ChEBI" id="CHEBI:131856"/>
        <dbReference type="ChEBI" id="CHEBI:131857"/>
        <dbReference type="ChEBI" id="CHEBI:175763"/>
    </reaction>
    <physiologicalReaction direction="left-to-right" evidence="2">
        <dbReference type="Rhea" id="RHEA:49633"/>
    </physiologicalReaction>
</comment>
<comment type="pathway">
    <text evidence="2">Secondary metabolite biosynthesis; terpenoid biosynthesis.</text>
</comment>
<comment type="subcellular location">
    <subcellularLocation>
        <location evidence="1">Membrane</location>
        <topology evidence="1">Multi-pass membrane protein</topology>
    </subcellularLocation>
</comment>
<comment type="disruption phenotype">
    <text evidence="2">Completely abolishes the production of novofumigatonin as well as asnovolin A.</text>
</comment>
<comment type="similarity">
    <text evidence="4">Belongs to the UbiA prenyltransferase family.</text>
</comment>